<organism>
    <name type="scientific">Bordetella petrii (strain ATCC BAA-461 / DSM 12804 / CCUG 43448)</name>
    <dbReference type="NCBI Taxonomy" id="340100"/>
    <lineage>
        <taxon>Bacteria</taxon>
        <taxon>Pseudomonadati</taxon>
        <taxon>Pseudomonadota</taxon>
        <taxon>Betaproteobacteria</taxon>
        <taxon>Burkholderiales</taxon>
        <taxon>Alcaligenaceae</taxon>
        <taxon>Bordetella</taxon>
    </lineage>
</organism>
<accession>A9IJI7</accession>
<proteinExistence type="inferred from homology"/>
<sequence length="447" mass="47356">MTGQPYLDLPRARQARGQVALPGSKSISNRVLLLAALAAGRTDISGLLDSDDTRVMLAALRQLGVELAEAGEGRVTVGGAGRFPVKQADLFLGNAGTAFRPLTAALALMGGQYRLSGVPRMHERPIGDLVDALRQWGARIDYLGQAGYPPLAVGEGRIRADAPARVQGAVSSQFLTALLLAAPVLAQGSDRPVVIEVAGELISKPYIEITLNLMARYGVQVRRDGWRTFTIEPGAAYRSPGAIAVEGDASSASYFLALGAIGGGPVRVTGVGADSIQGDVAFARTLADMGVQIDYGPDWIEARGVRVDQGGRLKAFDTDFNLIPDAAMTAAALALYADGPCRLRNIGSWRVKETDRIHAMHTELAKLGAEVESGPDWLRITPPADGGWRDAHIGTWDDHRMAMCFSLAAFGPAAVRILDPGCVSKTFPDYFDVYAGLVSGAPDSYDD</sequence>
<gene>
    <name evidence="1" type="primary">aroA</name>
    <name type="ordered locus">Bpet1888</name>
</gene>
<feature type="chain" id="PRO_1000099667" description="3-phosphoshikimate 1-carboxyvinyltransferase">
    <location>
        <begin position="1"/>
        <end position="447"/>
    </location>
</feature>
<feature type="active site" description="Proton acceptor" evidence="1">
    <location>
        <position position="325"/>
    </location>
</feature>
<feature type="binding site" evidence="1">
    <location>
        <position position="25"/>
    </location>
    <ligand>
        <name>3-phosphoshikimate</name>
        <dbReference type="ChEBI" id="CHEBI:145989"/>
    </ligand>
</feature>
<feature type="binding site" evidence="1">
    <location>
        <position position="25"/>
    </location>
    <ligand>
        <name>phosphoenolpyruvate</name>
        <dbReference type="ChEBI" id="CHEBI:58702"/>
    </ligand>
</feature>
<feature type="binding site" evidence="1">
    <location>
        <position position="26"/>
    </location>
    <ligand>
        <name>3-phosphoshikimate</name>
        <dbReference type="ChEBI" id="CHEBI:145989"/>
    </ligand>
</feature>
<feature type="binding site" evidence="1">
    <location>
        <position position="30"/>
    </location>
    <ligand>
        <name>3-phosphoshikimate</name>
        <dbReference type="ChEBI" id="CHEBI:145989"/>
    </ligand>
</feature>
<feature type="binding site" evidence="1">
    <location>
        <position position="96"/>
    </location>
    <ligand>
        <name>phosphoenolpyruvate</name>
        <dbReference type="ChEBI" id="CHEBI:58702"/>
    </ligand>
</feature>
<feature type="binding site" evidence="1">
    <location>
        <position position="124"/>
    </location>
    <ligand>
        <name>phosphoenolpyruvate</name>
        <dbReference type="ChEBI" id="CHEBI:58702"/>
    </ligand>
</feature>
<feature type="binding site" evidence="1">
    <location>
        <position position="171"/>
    </location>
    <ligand>
        <name>3-phosphoshikimate</name>
        <dbReference type="ChEBI" id="CHEBI:145989"/>
    </ligand>
</feature>
<feature type="binding site" evidence="1">
    <location>
        <position position="172"/>
    </location>
    <ligand>
        <name>3-phosphoshikimate</name>
        <dbReference type="ChEBI" id="CHEBI:145989"/>
    </ligand>
</feature>
<feature type="binding site" evidence="1">
    <location>
        <position position="173"/>
    </location>
    <ligand>
        <name>3-phosphoshikimate</name>
        <dbReference type="ChEBI" id="CHEBI:145989"/>
    </ligand>
</feature>
<feature type="binding site" evidence="1">
    <location>
        <position position="173"/>
    </location>
    <ligand>
        <name>phosphoenolpyruvate</name>
        <dbReference type="ChEBI" id="CHEBI:58702"/>
    </ligand>
</feature>
<feature type="binding site" evidence="1">
    <location>
        <position position="203"/>
    </location>
    <ligand>
        <name>3-phosphoshikimate</name>
        <dbReference type="ChEBI" id="CHEBI:145989"/>
    </ligand>
</feature>
<feature type="binding site" evidence="1">
    <location>
        <position position="325"/>
    </location>
    <ligand>
        <name>3-phosphoshikimate</name>
        <dbReference type="ChEBI" id="CHEBI:145989"/>
    </ligand>
</feature>
<feature type="binding site" evidence="1">
    <location>
        <position position="352"/>
    </location>
    <ligand>
        <name>3-phosphoshikimate</name>
        <dbReference type="ChEBI" id="CHEBI:145989"/>
    </ligand>
</feature>
<feature type="binding site" evidence="1">
    <location>
        <position position="356"/>
    </location>
    <ligand>
        <name>phosphoenolpyruvate</name>
        <dbReference type="ChEBI" id="CHEBI:58702"/>
    </ligand>
</feature>
<feature type="binding site" evidence="1">
    <location>
        <position position="400"/>
    </location>
    <ligand>
        <name>phosphoenolpyruvate</name>
        <dbReference type="ChEBI" id="CHEBI:58702"/>
    </ligand>
</feature>
<feature type="binding site" evidence="1">
    <location>
        <position position="425"/>
    </location>
    <ligand>
        <name>phosphoenolpyruvate</name>
        <dbReference type="ChEBI" id="CHEBI:58702"/>
    </ligand>
</feature>
<reference key="1">
    <citation type="journal article" date="2008" name="BMC Genomics">
        <title>The missing link: Bordetella petrii is endowed with both the metabolic versatility of environmental bacteria and virulence traits of pathogenic Bordetellae.</title>
        <authorList>
            <person name="Gross R."/>
            <person name="Guzman C.A."/>
            <person name="Sebaihia M."/>
            <person name="Martin dos Santos V.A.P."/>
            <person name="Pieper D.H."/>
            <person name="Koebnik R."/>
            <person name="Lechner M."/>
            <person name="Bartels D."/>
            <person name="Buhrmester J."/>
            <person name="Choudhuri J.V."/>
            <person name="Ebensen T."/>
            <person name="Gaigalat L."/>
            <person name="Herrmann S."/>
            <person name="Khachane A.N."/>
            <person name="Larisch C."/>
            <person name="Link S."/>
            <person name="Linke B."/>
            <person name="Meyer F."/>
            <person name="Mormann S."/>
            <person name="Nakunst D."/>
            <person name="Rueckert C."/>
            <person name="Schneiker-Bekel S."/>
            <person name="Schulze K."/>
            <person name="Voerholter F.-J."/>
            <person name="Yevsa T."/>
            <person name="Engle J.T."/>
            <person name="Goldman W.E."/>
            <person name="Puehler A."/>
            <person name="Goebel U.B."/>
            <person name="Goesmann A."/>
            <person name="Bloecker H."/>
            <person name="Kaiser O."/>
            <person name="Martinez-Arias R."/>
        </authorList>
    </citation>
    <scope>NUCLEOTIDE SEQUENCE [LARGE SCALE GENOMIC DNA]</scope>
    <source>
        <strain>ATCC BAA-461 / DSM 12804 / CCUG 43448</strain>
    </source>
</reference>
<protein>
    <recommendedName>
        <fullName evidence="1">3-phosphoshikimate 1-carboxyvinyltransferase</fullName>
        <ecNumber evidence="1">2.5.1.19</ecNumber>
    </recommendedName>
    <alternativeName>
        <fullName evidence="1">5-enolpyruvylshikimate-3-phosphate synthase</fullName>
        <shortName evidence="1">EPSP synthase</shortName>
        <shortName evidence="1">EPSPS</shortName>
    </alternativeName>
</protein>
<dbReference type="EC" id="2.5.1.19" evidence="1"/>
<dbReference type="EMBL" id="AM902716">
    <property type="protein sequence ID" value="CAP42227.1"/>
    <property type="molecule type" value="Genomic_DNA"/>
</dbReference>
<dbReference type="SMR" id="A9IJI7"/>
<dbReference type="STRING" id="94624.Bpet1888"/>
<dbReference type="KEGG" id="bpt:Bpet1888"/>
<dbReference type="eggNOG" id="COG0128">
    <property type="taxonomic scope" value="Bacteria"/>
</dbReference>
<dbReference type="UniPathway" id="UPA00053">
    <property type="reaction ID" value="UER00089"/>
</dbReference>
<dbReference type="Proteomes" id="UP000001225">
    <property type="component" value="Chromosome"/>
</dbReference>
<dbReference type="GO" id="GO:0005737">
    <property type="term" value="C:cytoplasm"/>
    <property type="evidence" value="ECO:0007669"/>
    <property type="project" value="UniProtKB-SubCell"/>
</dbReference>
<dbReference type="GO" id="GO:0003866">
    <property type="term" value="F:3-phosphoshikimate 1-carboxyvinyltransferase activity"/>
    <property type="evidence" value="ECO:0007669"/>
    <property type="project" value="UniProtKB-UniRule"/>
</dbReference>
<dbReference type="GO" id="GO:0008652">
    <property type="term" value="P:amino acid biosynthetic process"/>
    <property type="evidence" value="ECO:0007669"/>
    <property type="project" value="UniProtKB-KW"/>
</dbReference>
<dbReference type="GO" id="GO:0009073">
    <property type="term" value="P:aromatic amino acid family biosynthetic process"/>
    <property type="evidence" value="ECO:0007669"/>
    <property type="project" value="UniProtKB-KW"/>
</dbReference>
<dbReference type="GO" id="GO:0009423">
    <property type="term" value="P:chorismate biosynthetic process"/>
    <property type="evidence" value="ECO:0007669"/>
    <property type="project" value="UniProtKB-UniRule"/>
</dbReference>
<dbReference type="CDD" id="cd01556">
    <property type="entry name" value="EPSP_synthase"/>
    <property type="match status" value="1"/>
</dbReference>
<dbReference type="Gene3D" id="3.65.10.10">
    <property type="entry name" value="Enolpyruvate transferase domain"/>
    <property type="match status" value="2"/>
</dbReference>
<dbReference type="HAMAP" id="MF_00210">
    <property type="entry name" value="EPSP_synth"/>
    <property type="match status" value="1"/>
</dbReference>
<dbReference type="InterPro" id="IPR001986">
    <property type="entry name" value="Enolpyruvate_Tfrase_dom"/>
</dbReference>
<dbReference type="InterPro" id="IPR036968">
    <property type="entry name" value="Enolpyruvate_Tfrase_sf"/>
</dbReference>
<dbReference type="InterPro" id="IPR006264">
    <property type="entry name" value="EPSP_synthase"/>
</dbReference>
<dbReference type="InterPro" id="IPR023193">
    <property type="entry name" value="EPSP_synthase_CS"/>
</dbReference>
<dbReference type="InterPro" id="IPR013792">
    <property type="entry name" value="RNA3'P_cycl/enolpyr_Trfase_a/b"/>
</dbReference>
<dbReference type="NCBIfam" id="TIGR01356">
    <property type="entry name" value="aroA"/>
    <property type="match status" value="1"/>
</dbReference>
<dbReference type="PANTHER" id="PTHR21090">
    <property type="entry name" value="AROM/DEHYDROQUINATE SYNTHASE"/>
    <property type="match status" value="1"/>
</dbReference>
<dbReference type="PANTHER" id="PTHR21090:SF5">
    <property type="entry name" value="PENTAFUNCTIONAL AROM POLYPEPTIDE"/>
    <property type="match status" value="1"/>
</dbReference>
<dbReference type="Pfam" id="PF00275">
    <property type="entry name" value="EPSP_synthase"/>
    <property type="match status" value="1"/>
</dbReference>
<dbReference type="PIRSF" id="PIRSF000505">
    <property type="entry name" value="EPSPS"/>
    <property type="match status" value="1"/>
</dbReference>
<dbReference type="SUPFAM" id="SSF55205">
    <property type="entry name" value="EPT/RTPC-like"/>
    <property type="match status" value="1"/>
</dbReference>
<dbReference type="PROSITE" id="PS00104">
    <property type="entry name" value="EPSP_SYNTHASE_1"/>
    <property type="match status" value="1"/>
</dbReference>
<dbReference type="PROSITE" id="PS00885">
    <property type="entry name" value="EPSP_SYNTHASE_2"/>
    <property type="match status" value="1"/>
</dbReference>
<name>AROA_BORPD</name>
<evidence type="ECO:0000255" key="1">
    <source>
        <dbReference type="HAMAP-Rule" id="MF_00210"/>
    </source>
</evidence>
<keyword id="KW-0028">Amino-acid biosynthesis</keyword>
<keyword id="KW-0057">Aromatic amino acid biosynthesis</keyword>
<keyword id="KW-0963">Cytoplasm</keyword>
<keyword id="KW-0808">Transferase</keyword>
<comment type="function">
    <text evidence="1">Catalyzes the transfer of the enolpyruvyl moiety of phosphoenolpyruvate (PEP) to the 5-hydroxyl of shikimate-3-phosphate (S3P) to produce enolpyruvyl shikimate-3-phosphate and inorganic phosphate.</text>
</comment>
<comment type="catalytic activity">
    <reaction evidence="1">
        <text>3-phosphoshikimate + phosphoenolpyruvate = 5-O-(1-carboxyvinyl)-3-phosphoshikimate + phosphate</text>
        <dbReference type="Rhea" id="RHEA:21256"/>
        <dbReference type="ChEBI" id="CHEBI:43474"/>
        <dbReference type="ChEBI" id="CHEBI:57701"/>
        <dbReference type="ChEBI" id="CHEBI:58702"/>
        <dbReference type="ChEBI" id="CHEBI:145989"/>
        <dbReference type="EC" id="2.5.1.19"/>
    </reaction>
    <physiologicalReaction direction="left-to-right" evidence="1">
        <dbReference type="Rhea" id="RHEA:21257"/>
    </physiologicalReaction>
</comment>
<comment type="pathway">
    <text evidence="1">Metabolic intermediate biosynthesis; chorismate biosynthesis; chorismate from D-erythrose 4-phosphate and phosphoenolpyruvate: step 6/7.</text>
</comment>
<comment type="subunit">
    <text evidence="1">Monomer.</text>
</comment>
<comment type="subcellular location">
    <subcellularLocation>
        <location evidence="1">Cytoplasm</location>
    </subcellularLocation>
</comment>
<comment type="similarity">
    <text evidence="1">Belongs to the EPSP synthase family.</text>
</comment>